<organism>
    <name type="scientific">Mycobacterium tuberculosis (strain ATCC 25618 / H37Rv)</name>
    <dbReference type="NCBI Taxonomy" id="83332"/>
    <lineage>
        <taxon>Bacteria</taxon>
        <taxon>Bacillati</taxon>
        <taxon>Actinomycetota</taxon>
        <taxon>Actinomycetes</taxon>
        <taxon>Mycobacteriales</taxon>
        <taxon>Mycobacteriaceae</taxon>
        <taxon>Mycobacterium</taxon>
        <taxon>Mycobacterium tuberculosis complex</taxon>
    </lineage>
</organism>
<evidence type="ECO:0000250" key="1">
    <source>
        <dbReference type="UniProtKB" id="A0QS30"/>
    </source>
</evidence>
<evidence type="ECO:0000255" key="2">
    <source>
        <dbReference type="HAMAP-Rule" id="MF_01486"/>
    </source>
</evidence>
<keyword id="KW-0067">ATP-binding</keyword>
<keyword id="KW-0227">DNA damage</keyword>
<keyword id="KW-0234">DNA repair</keyword>
<keyword id="KW-0238">DNA-binding</keyword>
<keyword id="KW-0269">Exonuclease</keyword>
<keyword id="KW-0347">Helicase</keyword>
<keyword id="KW-0378">Hydrolase</keyword>
<keyword id="KW-0540">Nuclease</keyword>
<keyword id="KW-0547">Nucleotide-binding</keyword>
<keyword id="KW-1185">Reference proteome</keyword>
<feature type="chain" id="PRO_0000087122" description="RecBCD enzyme subunit RecC">
    <location>
        <begin position="1"/>
        <end position="1097"/>
    </location>
</feature>
<proteinExistence type="evidence at protein level"/>
<accession>P9WIQ5</accession>
<accession>L0T7A5</accession>
<accession>P96921</accession>
<name>RECC_MYCTU</name>
<sequence>MALHLHRAERTDLLADGLGALLADPQPDPFAQELVLVAARGVERWLSQRLSLVLGCGPGRADGVCAGIAFRNPQSLIAEITGTLDDDPWSPEALAWPLLAVIDASLDEPWCRTLASHLGHFATTDAEAELRRGRRYSVARRLAGLFASYARQRPGLLAAWLDGDLGELPGDLAWQPPLWRALVTTVGADPPHVRHDKTIARLRDGPADLPARLSLFGHTRLACTDVQLLDALAVHHDLHLWLPHPSDELWRALAGFQGADGLLPRRQDTSRRAAQHPLLETLGRDVRELQRALPAARATDEFLGATTKPDTLLGWLQADIAGNAPRPAGRSLSDADRSVQVHACHGPARQIDVLREVLLGLLEDDPTLQPRDIVVMCPDIDTYAPLIVAGFGLGEVAGDCHPAHRLRVRLADRALTQTNPLLSVAAELLTIAETRATASQLLNLAQAAPVRAKFGFADDDLDTITTWVRESNIRWGFDPTHRRRYGLDTVVHNTWRFGLDRILTGVAMSEDSQAWLDTALPLDDVGSNRVELAGRLAEFVERLHHVVGGLSGARPLVAWLDALATGIDLLTACNDGWQRAQVQREFADVLARAGSRAAPLLRLPDVRALLDAQLAGRPTRANFRTGTLTVCTMVPMRSVPHRVVCLVGLDDGVFPRLSHPDGDDVLAREPMTGERDIRSEDRQLLLDAIGAATQTLVITYTGADERTGQPRPPAVPLAELLDALDQTTSAPVRERILVTHPLQPFDRKNVTPGALLGAKPFTFDPAALAAAQAAAGKRCPPTAFISGRLPAPPAADVTLADLLDFFKDPVKGFFRALDYTLPWDVDTVEDSIPVQVDALAEWTVGERMLRDMLRGLHPDDAAHSEWRRGTLPPGRLGVRRAKEIRNRARDLAAAALAHRDGHGQAHDVDVDLGDGRRLSGTVTPVFGGRTVSVTYSKLAPKHVLPAWIGLVTLAAQEPGREWSALCIGRSKTRNHIARRLFVPPPDPVAVLRELVLLYDAGRREPLPLPLKTSCAWAQARRDGQDPYPPARECWQTNRFRPGDDDAPAHVRAWGPRAPFEVLLGKPRAGEEVAGEETRLGALAARLWLPLLAAEGSV</sequence>
<gene>
    <name evidence="2" type="primary">recC</name>
    <name type="ordered locus">Rv0631c</name>
    <name type="ORF">MTCY20H10.12c</name>
</gene>
<comment type="function">
    <text evidence="1">A helicase/nuclease that prepares dsDNA breaks (DSB) for recombinational DNA repair. Binds to DSBs and unwinds DNA via a highly rapid and processive ATP-dependent bidirectional helicase activity. Holoenzyme degrades any linearized DNA that is unable to undergo homologous recombination. In the holoenzyme this subunit recognizes the wild-type Chi sequence, and when added to isolated RecB increases its ATP-dependent helicase processivity. Unlike the case in E.coli, suppresses RecA-dependent homologous recombination, is instead required for single-strand annealing pathway repair of DSB.</text>
</comment>
<comment type="subunit">
    <text evidence="2">Heterotrimer of RecB, RecC and RecD. All subunits contribute to DNA-binding.</text>
</comment>
<comment type="miscellaneous">
    <text evidence="2">In the RecBCD complex, RecB has a slow 3'-5' helicase, an exonuclease activity and loads RecA onto ssDNA, RecD has a fast 5'-3' helicase activity, while RecC stimulates the ATPase and processivity of the RecB helicase and contributes to recognition of the Chi site.</text>
</comment>
<comment type="similarity">
    <text evidence="2">Belongs to the RecC family.</text>
</comment>
<dbReference type="EMBL" id="AL123456">
    <property type="protein sequence ID" value="CCP43372.1"/>
    <property type="molecule type" value="Genomic_DNA"/>
</dbReference>
<dbReference type="PIR" id="D70612">
    <property type="entry name" value="D70612"/>
</dbReference>
<dbReference type="RefSeq" id="NP_215145.1">
    <property type="nucleotide sequence ID" value="NC_000962.3"/>
</dbReference>
<dbReference type="RefSeq" id="WP_003900193.1">
    <property type="nucleotide sequence ID" value="NZ_KK339370.1"/>
</dbReference>
<dbReference type="SMR" id="P9WIQ5"/>
<dbReference type="STRING" id="83332.Rv0631c"/>
<dbReference type="PaxDb" id="83332-Rv0631c"/>
<dbReference type="GeneID" id="888008"/>
<dbReference type="KEGG" id="mtu:Rv0631c"/>
<dbReference type="KEGG" id="mtv:RVBD_0631c"/>
<dbReference type="TubercuList" id="Rv0631c"/>
<dbReference type="eggNOG" id="COG1330">
    <property type="taxonomic scope" value="Bacteria"/>
</dbReference>
<dbReference type="InParanoid" id="P9WIQ5"/>
<dbReference type="OrthoDB" id="9762834at2"/>
<dbReference type="PhylomeDB" id="P9WIQ5"/>
<dbReference type="Proteomes" id="UP000001584">
    <property type="component" value="Chromosome"/>
</dbReference>
<dbReference type="GO" id="GO:0009338">
    <property type="term" value="C:exodeoxyribonuclease V complex"/>
    <property type="evidence" value="ECO:0007669"/>
    <property type="project" value="InterPro"/>
</dbReference>
<dbReference type="GO" id="GO:0005576">
    <property type="term" value="C:extracellular region"/>
    <property type="evidence" value="ECO:0007005"/>
    <property type="project" value="MTBBASE"/>
</dbReference>
<dbReference type="GO" id="GO:0009274">
    <property type="term" value="C:peptidoglycan-based cell wall"/>
    <property type="evidence" value="ECO:0007005"/>
    <property type="project" value="MTBBASE"/>
</dbReference>
<dbReference type="GO" id="GO:0005886">
    <property type="term" value="C:plasma membrane"/>
    <property type="evidence" value="ECO:0007005"/>
    <property type="project" value="MTBBASE"/>
</dbReference>
<dbReference type="GO" id="GO:0005524">
    <property type="term" value="F:ATP binding"/>
    <property type="evidence" value="ECO:0007669"/>
    <property type="project" value="UniProtKB-UniRule"/>
</dbReference>
<dbReference type="GO" id="GO:0003677">
    <property type="term" value="F:DNA binding"/>
    <property type="evidence" value="ECO:0007669"/>
    <property type="project" value="UniProtKB-UniRule"/>
</dbReference>
<dbReference type="GO" id="GO:0003678">
    <property type="term" value="F:DNA helicase activity"/>
    <property type="evidence" value="ECO:0007669"/>
    <property type="project" value="UniProtKB-UniRule"/>
</dbReference>
<dbReference type="GO" id="GO:0008854">
    <property type="term" value="F:exodeoxyribonuclease V activity"/>
    <property type="evidence" value="ECO:0007669"/>
    <property type="project" value="UniProtKB-EC"/>
</dbReference>
<dbReference type="GO" id="GO:0006310">
    <property type="term" value="P:DNA recombination"/>
    <property type="evidence" value="ECO:0000318"/>
    <property type="project" value="GO_Central"/>
</dbReference>
<dbReference type="GO" id="GO:0000724">
    <property type="term" value="P:double-strand break repair via homologous recombination"/>
    <property type="evidence" value="ECO:0007669"/>
    <property type="project" value="UniProtKB-UniRule"/>
</dbReference>
<dbReference type="FunFam" id="3.40.50.300:FF:003107">
    <property type="entry name" value="RecBCD enzyme subunit RecC"/>
    <property type="match status" value="1"/>
</dbReference>
<dbReference type="Gene3D" id="1.10.10.160">
    <property type="match status" value="1"/>
</dbReference>
<dbReference type="Gene3D" id="3.40.50.10930">
    <property type="match status" value="1"/>
</dbReference>
<dbReference type="Gene3D" id="3.40.50.300">
    <property type="entry name" value="P-loop containing nucleotide triphosphate hydrolases"/>
    <property type="match status" value="2"/>
</dbReference>
<dbReference type="HAMAP" id="MF_01486">
    <property type="entry name" value="RecC"/>
    <property type="match status" value="1"/>
</dbReference>
<dbReference type="InterPro" id="IPR013986">
    <property type="entry name" value="DExx_box_DNA_helicase_dom_sf"/>
</dbReference>
<dbReference type="InterPro" id="IPR027417">
    <property type="entry name" value="P-loop_NTPase"/>
</dbReference>
<dbReference type="InterPro" id="IPR006697">
    <property type="entry name" value="RecC"/>
</dbReference>
<dbReference type="InterPro" id="IPR041500">
    <property type="entry name" value="RecC_C"/>
</dbReference>
<dbReference type="InterPro" id="IPR011335">
    <property type="entry name" value="Restrct_endonuc-II-like"/>
</dbReference>
<dbReference type="NCBIfam" id="TIGR01450">
    <property type="entry name" value="recC"/>
    <property type="match status" value="1"/>
</dbReference>
<dbReference type="PANTHER" id="PTHR30591">
    <property type="entry name" value="RECBCD ENZYME SUBUNIT RECC"/>
    <property type="match status" value="1"/>
</dbReference>
<dbReference type="PANTHER" id="PTHR30591:SF1">
    <property type="entry name" value="RECBCD ENZYME SUBUNIT RECC"/>
    <property type="match status" value="1"/>
</dbReference>
<dbReference type="Pfam" id="PF04257">
    <property type="entry name" value="Exonuc_V_gamma"/>
    <property type="match status" value="1"/>
</dbReference>
<dbReference type="Pfam" id="PF17946">
    <property type="entry name" value="RecC_C"/>
    <property type="match status" value="1"/>
</dbReference>
<dbReference type="PIRSF" id="PIRSF000980">
    <property type="entry name" value="RecC"/>
    <property type="match status" value="1"/>
</dbReference>
<dbReference type="SUPFAM" id="SSF52540">
    <property type="entry name" value="P-loop containing nucleoside triphosphate hydrolases"/>
    <property type="match status" value="2"/>
</dbReference>
<dbReference type="SUPFAM" id="SSF52980">
    <property type="entry name" value="Restriction endonuclease-like"/>
    <property type="match status" value="1"/>
</dbReference>
<reference key="1">
    <citation type="journal article" date="1998" name="Nature">
        <title>Deciphering the biology of Mycobacterium tuberculosis from the complete genome sequence.</title>
        <authorList>
            <person name="Cole S.T."/>
            <person name="Brosch R."/>
            <person name="Parkhill J."/>
            <person name="Garnier T."/>
            <person name="Churcher C.M."/>
            <person name="Harris D.E."/>
            <person name="Gordon S.V."/>
            <person name="Eiglmeier K."/>
            <person name="Gas S."/>
            <person name="Barry C.E. III"/>
            <person name="Tekaia F."/>
            <person name="Badcock K."/>
            <person name="Basham D."/>
            <person name="Brown D."/>
            <person name="Chillingworth T."/>
            <person name="Connor R."/>
            <person name="Davies R.M."/>
            <person name="Devlin K."/>
            <person name="Feltwell T."/>
            <person name="Gentles S."/>
            <person name="Hamlin N."/>
            <person name="Holroyd S."/>
            <person name="Hornsby T."/>
            <person name="Jagels K."/>
            <person name="Krogh A."/>
            <person name="McLean J."/>
            <person name="Moule S."/>
            <person name="Murphy L.D."/>
            <person name="Oliver S."/>
            <person name="Osborne J."/>
            <person name="Quail M.A."/>
            <person name="Rajandream M.A."/>
            <person name="Rogers J."/>
            <person name="Rutter S."/>
            <person name="Seeger K."/>
            <person name="Skelton S."/>
            <person name="Squares S."/>
            <person name="Squares R."/>
            <person name="Sulston J.E."/>
            <person name="Taylor K."/>
            <person name="Whitehead S."/>
            <person name="Barrell B.G."/>
        </authorList>
    </citation>
    <scope>NUCLEOTIDE SEQUENCE [LARGE SCALE GENOMIC DNA]</scope>
    <source>
        <strain>ATCC 25618 / H37Rv</strain>
    </source>
</reference>
<reference key="2">
    <citation type="journal article" date="2011" name="Mol. Cell. Proteomics">
        <title>Proteogenomic analysis of Mycobacterium tuberculosis by high resolution mass spectrometry.</title>
        <authorList>
            <person name="Kelkar D.S."/>
            <person name="Kumar D."/>
            <person name="Kumar P."/>
            <person name="Balakrishnan L."/>
            <person name="Muthusamy B."/>
            <person name="Yadav A.K."/>
            <person name="Shrivastava P."/>
            <person name="Marimuthu A."/>
            <person name="Anand S."/>
            <person name="Sundaram H."/>
            <person name="Kingsbury R."/>
            <person name="Harsha H.C."/>
            <person name="Nair B."/>
            <person name="Prasad T.S."/>
            <person name="Chauhan D.S."/>
            <person name="Katoch K."/>
            <person name="Katoch V.M."/>
            <person name="Kumar P."/>
            <person name="Chaerkady R."/>
            <person name="Ramachandran S."/>
            <person name="Dash D."/>
            <person name="Pandey A."/>
        </authorList>
    </citation>
    <scope>IDENTIFICATION BY MASS SPECTROMETRY [LARGE SCALE ANALYSIS]</scope>
    <source>
        <strain>ATCC 25618 / H37Rv</strain>
    </source>
</reference>
<protein>
    <recommendedName>
        <fullName evidence="2">RecBCD enzyme subunit RecC</fullName>
    </recommendedName>
    <alternativeName>
        <fullName evidence="2">Exonuclease V subunit RecC</fullName>
        <shortName evidence="2">ExoV subunit RecC</shortName>
    </alternativeName>
    <alternativeName>
        <fullName evidence="2">Helicase/nuclease RecBCD subunit RecC</fullName>
    </alternativeName>
</protein>